<dbReference type="EC" id="3.4.11.7" evidence="4 10"/>
<dbReference type="EMBL" id="L14721">
    <property type="protein sequence ID" value="AAA35522.1"/>
    <property type="molecule type" value="mRNA"/>
</dbReference>
<dbReference type="EMBL" id="L12468">
    <property type="protein sequence ID" value="AAA16876.1"/>
    <property type="molecule type" value="mRNA"/>
</dbReference>
<dbReference type="EMBL" id="AC017068">
    <property type="status" value="NOT_ANNOTATED_CDS"/>
    <property type="molecule type" value="Genomic_DNA"/>
</dbReference>
<dbReference type="EMBL" id="AC098798">
    <property type="status" value="NOT_ANNOTATED_CDS"/>
    <property type="molecule type" value="Genomic_DNA"/>
</dbReference>
<dbReference type="EMBL" id="BC094770">
    <property type="protein sequence ID" value="AAH94770.1"/>
    <property type="molecule type" value="mRNA"/>
</dbReference>
<dbReference type="CCDS" id="CCDS3691.1"/>
<dbReference type="PIR" id="A47531">
    <property type="entry name" value="A47531"/>
</dbReference>
<dbReference type="RefSeq" id="NP_001968.3">
    <property type="nucleotide sequence ID" value="NM_001977.3"/>
</dbReference>
<dbReference type="PDB" id="4KX7">
    <property type="method" value="X-ray"/>
    <property type="resolution" value="2.15 A"/>
    <property type="chains" value="A=76-957"/>
</dbReference>
<dbReference type="PDB" id="4KX8">
    <property type="method" value="X-ray"/>
    <property type="resolution" value="2.40 A"/>
    <property type="chains" value="A=76-957"/>
</dbReference>
<dbReference type="PDB" id="4KX9">
    <property type="method" value="X-ray"/>
    <property type="resolution" value="2.25 A"/>
    <property type="chains" value="A=76-957"/>
</dbReference>
<dbReference type="PDB" id="4KXA">
    <property type="method" value="X-ray"/>
    <property type="resolution" value="2.40 A"/>
    <property type="chains" value="A=76-957"/>
</dbReference>
<dbReference type="PDB" id="4KXB">
    <property type="method" value="X-ray"/>
    <property type="resolution" value="2.40 A"/>
    <property type="chains" value="A=76-957"/>
</dbReference>
<dbReference type="PDB" id="4KXC">
    <property type="method" value="X-ray"/>
    <property type="resolution" value="2.40 A"/>
    <property type="chains" value="A=76-957"/>
</dbReference>
<dbReference type="PDB" id="4KXD">
    <property type="method" value="X-ray"/>
    <property type="resolution" value="2.15 A"/>
    <property type="chains" value="A=76-957"/>
</dbReference>
<dbReference type="PDBsum" id="4KX7"/>
<dbReference type="PDBsum" id="4KX8"/>
<dbReference type="PDBsum" id="4KX9"/>
<dbReference type="PDBsum" id="4KXA"/>
<dbReference type="PDBsum" id="4KXB"/>
<dbReference type="PDBsum" id="4KXC"/>
<dbReference type="PDBsum" id="4KXD"/>
<dbReference type="SMR" id="Q07075"/>
<dbReference type="BioGRID" id="108342">
    <property type="interactions" value="6"/>
</dbReference>
<dbReference type="FunCoup" id="Q07075">
    <property type="interactions" value="131"/>
</dbReference>
<dbReference type="IntAct" id="Q07075">
    <property type="interactions" value="8"/>
</dbReference>
<dbReference type="STRING" id="9606.ENSP00000265162"/>
<dbReference type="BindingDB" id="Q07075"/>
<dbReference type="ChEMBL" id="CHEMBL3439"/>
<dbReference type="DrugBank" id="DB00142">
    <property type="generic name" value="Glutamic acid"/>
</dbReference>
<dbReference type="DrugBank" id="DB08040">
    <property type="generic name" value="Kelatorphan"/>
</dbReference>
<dbReference type="DrugBank" id="DB13107">
    <property type="generic name" value="QGC-001"/>
</dbReference>
<dbReference type="MEROPS" id="M01.003"/>
<dbReference type="GlyConnect" id="1940">
    <property type="glycosylation" value="8 N-Linked glycans (6 sites)"/>
</dbReference>
<dbReference type="GlyCosmos" id="Q07075">
    <property type="glycosylation" value="20 sites, 13 glycans"/>
</dbReference>
<dbReference type="GlyGen" id="Q07075">
    <property type="glycosylation" value="22 sites, 139 N-linked glycans (9 sites), 5 O-linked glycans (4 sites)"/>
</dbReference>
<dbReference type="iPTMnet" id="Q07075"/>
<dbReference type="PhosphoSitePlus" id="Q07075"/>
<dbReference type="SwissPalm" id="Q07075"/>
<dbReference type="BioMuta" id="ENPEP"/>
<dbReference type="DMDM" id="296439445"/>
<dbReference type="jPOST" id="Q07075"/>
<dbReference type="MassIVE" id="Q07075"/>
<dbReference type="PaxDb" id="9606-ENSP00000265162"/>
<dbReference type="PeptideAtlas" id="Q07075"/>
<dbReference type="ProteomicsDB" id="58502"/>
<dbReference type="Pumba" id="Q07075"/>
<dbReference type="Antibodypedia" id="979">
    <property type="antibodies" value="538 antibodies from 36 providers"/>
</dbReference>
<dbReference type="DNASU" id="2028"/>
<dbReference type="Ensembl" id="ENST00000265162.10">
    <property type="protein sequence ID" value="ENSP00000265162.5"/>
    <property type="gene ID" value="ENSG00000138792.10"/>
</dbReference>
<dbReference type="GeneID" id="2028"/>
<dbReference type="KEGG" id="hsa:2028"/>
<dbReference type="MANE-Select" id="ENST00000265162.10">
    <property type="protein sequence ID" value="ENSP00000265162.5"/>
    <property type="RefSeq nucleotide sequence ID" value="NM_001977.4"/>
    <property type="RefSeq protein sequence ID" value="NP_001968.3"/>
</dbReference>
<dbReference type="UCSC" id="uc003iab.5">
    <property type="organism name" value="human"/>
</dbReference>
<dbReference type="AGR" id="HGNC:3355"/>
<dbReference type="CTD" id="2028"/>
<dbReference type="DisGeNET" id="2028"/>
<dbReference type="GeneCards" id="ENPEP"/>
<dbReference type="HGNC" id="HGNC:3355">
    <property type="gene designation" value="ENPEP"/>
</dbReference>
<dbReference type="HPA" id="ENSG00000138792">
    <property type="expression patterns" value="Tissue enhanced (intestine, kidney)"/>
</dbReference>
<dbReference type="MIM" id="138297">
    <property type="type" value="gene"/>
</dbReference>
<dbReference type="neXtProt" id="NX_Q07075"/>
<dbReference type="OpenTargets" id="ENSG00000138792"/>
<dbReference type="PharmGKB" id="PA27790"/>
<dbReference type="VEuPathDB" id="HostDB:ENSG00000138792"/>
<dbReference type="eggNOG" id="KOG1046">
    <property type="taxonomic scope" value="Eukaryota"/>
</dbReference>
<dbReference type="GeneTree" id="ENSGT00940000156946"/>
<dbReference type="HOGENOM" id="CLU_003705_0_1_1"/>
<dbReference type="InParanoid" id="Q07075"/>
<dbReference type="OMA" id="WNVWSQF"/>
<dbReference type="OrthoDB" id="510539at2759"/>
<dbReference type="PAN-GO" id="Q07075">
    <property type="GO annotations" value="9 GO annotations based on evolutionary models"/>
</dbReference>
<dbReference type="PhylomeDB" id="Q07075"/>
<dbReference type="TreeFam" id="TF300395"/>
<dbReference type="BioCyc" id="MetaCyc:HS06560-MONOMER"/>
<dbReference type="BRENDA" id="3.4.11.7">
    <property type="organism ID" value="2681"/>
</dbReference>
<dbReference type="PathwayCommons" id="Q07075"/>
<dbReference type="Reactome" id="R-HSA-2022377">
    <property type="pathway name" value="Metabolism of Angiotensinogen to Angiotensins"/>
</dbReference>
<dbReference type="SignaLink" id="Q07075"/>
<dbReference type="BioGRID-ORCS" id="2028">
    <property type="hits" value="11 hits in 1153 CRISPR screens"/>
</dbReference>
<dbReference type="ChiTaRS" id="ENPEP">
    <property type="organism name" value="human"/>
</dbReference>
<dbReference type="EvolutionaryTrace" id="Q07075"/>
<dbReference type="GenomeRNAi" id="2028"/>
<dbReference type="Pharos" id="Q07075">
    <property type="development level" value="Tchem"/>
</dbReference>
<dbReference type="PRO" id="PR:Q07075"/>
<dbReference type="Proteomes" id="UP000005640">
    <property type="component" value="Chromosome 4"/>
</dbReference>
<dbReference type="RNAct" id="Q07075">
    <property type="molecule type" value="protein"/>
</dbReference>
<dbReference type="Bgee" id="ENSG00000138792">
    <property type="expression patterns" value="Expressed in jejunal mucosa and 143 other cell types or tissues"/>
</dbReference>
<dbReference type="ExpressionAtlas" id="Q07075">
    <property type="expression patterns" value="baseline and differential"/>
</dbReference>
<dbReference type="GO" id="GO:0045177">
    <property type="term" value="C:apical part of cell"/>
    <property type="evidence" value="ECO:0000250"/>
    <property type="project" value="UniProtKB"/>
</dbReference>
<dbReference type="GO" id="GO:0016324">
    <property type="term" value="C:apical plasma membrane"/>
    <property type="evidence" value="ECO:0000250"/>
    <property type="project" value="UniProtKB"/>
</dbReference>
<dbReference type="GO" id="GO:0005903">
    <property type="term" value="C:brush border"/>
    <property type="evidence" value="ECO:0000250"/>
    <property type="project" value="UniProtKB"/>
</dbReference>
<dbReference type="GO" id="GO:0005737">
    <property type="term" value="C:cytoplasm"/>
    <property type="evidence" value="ECO:0000318"/>
    <property type="project" value="GO_Central"/>
</dbReference>
<dbReference type="GO" id="GO:0031410">
    <property type="term" value="C:cytoplasmic vesicle"/>
    <property type="evidence" value="ECO:0000250"/>
    <property type="project" value="UniProtKB"/>
</dbReference>
<dbReference type="GO" id="GO:0009897">
    <property type="term" value="C:external side of plasma membrane"/>
    <property type="evidence" value="ECO:0000250"/>
    <property type="project" value="UniProtKB"/>
</dbReference>
<dbReference type="GO" id="GO:0070062">
    <property type="term" value="C:extracellular exosome"/>
    <property type="evidence" value="ECO:0007005"/>
    <property type="project" value="UniProtKB"/>
</dbReference>
<dbReference type="GO" id="GO:0005615">
    <property type="term" value="C:extracellular space"/>
    <property type="evidence" value="ECO:0000318"/>
    <property type="project" value="GO_Central"/>
</dbReference>
<dbReference type="GO" id="GO:0005765">
    <property type="term" value="C:lysosomal membrane"/>
    <property type="evidence" value="ECO:0007005"/>
    <property type="project" value="UniProtKB"/>
</dbReference>
<dbReference type="GO" id="GO:0005886">
    <property type="term" value="C:plasma membrane"/>
    <property type="evidence" value="ECO:0000314"/>
    <property type="project" value="UniProtKB"/>
</dbReference>
<dbReference type="GO" id="GO:0004177">
    <property type="term" value="F:aminopeptidase activity"/>
    <property type="evidence" value="ECO:0000314"/>
    <property type="project" value="UniProtKB"/>
</dbReference>
<dbReference type="GO" id="GO:0004230">
    <property type="term" value="F:glutamyl aminopeptidase activity"/>
    <property type="evidence" value="ECO:0007669"/>
    <property type="project" value="UniProtKB-EC"/>
</dbReference>
<dbReference type="GO" id="GO:0070006">
    <property type="term" value="F:metalloaminopeptidase activity"/>
    <property type="evidence" value="ECO:0000314"/>
    <property type="project" value="UniProtKB"/>
</dbReference>
<dbReference type="GO" id="GO:0042277">
    <property type="term" value="F:peptide binding"/>
    <property type="evidence" value="ECO:0000318"/>
    <property type="project" value="GO_Central"/>
</dbReference>
<dbReference type="GO" id="GO:0008270">
    <property type="term" value="F:zinc ion binding"/>
    <property type="evidence" value="ECO:0000318"/>
    <property type="project" value="GO_Central"/>
</dbReference>
<dbReference type="GO" id="GO:0001525">
    <property type="term" value="P:angiogenesis"/>
    <property type="evidence" value="ECO:0000250"/>
    <property type="project" value="UniProtKB"/>
</dbReference>
<dbReference type="GO" id="GO:0002003">
    <property type="term" value="P:angiotensin maturation"/>
    <property type="evidence" value="ECO:0000303"/>
    <property type="project" value="UniProtKB"/>
</dbReference>
<dbReference type="GO" id="GO:0016477">
    <property type="term" value="P:cell migration"/>
    <property type="evidence" value="ECO:0000314"/>
    <property type="project" value="MGI"/>
</dbReference>
<dbReference type="GO" id="GO:0008283">
    <property type="term" value="P:cell population proliferation"/>
    <property type="evidence" value="ECO:0000314"/>
    <property type="project" value="MGI"/>
</dbReference>
<dbReference type="GO" id="GO:0007267">
    <property type="term" value="P:cell-cell signaling"/>
    <property type="evidence" value="ECO:0000303"/>
    <property type="project" value="UniProtKB"/>
</dbReference>
<dbReference type="GO" id="GO:0032835">
    <property type="term" value="P:glomerulus development"/>
    <property type="evidence" value="ECO:0000250"/>
    <property type="project" value="UniProtKB"/>
</dbReference>
<dbReference type="GO" id="GO:0043171">
    <property type="term" value="P:peptide catabolic process"/>
    <property type="evidence" value="ECO:0000318"/>
    <property type="project" value="GO_Central"/>
</dbReference>
<dbReference type="GO" id="GO:0006508">
    <property type="term" value="P:proteolysis"/>
    <property type="evidence" value="ECO:0000318"/>
    <property type="project" value="GO_Central"/>
</dbReference>
<dbReference type="GO" id="GO:0008217">
    <property type="term" value="P:regulation of blood pressure"/>
    <property type="evidence" value="ECO:0000318"/>
    <property type="project" value="GO_Central"/>
</dbReference>
<dbReference type="GO" id="GO:0003081">
    <property type="term" value="P:regulation of systemic arterial blood pressure by renin-angiotensin"/>
    <property type="evidence" value="ECO:0000314"/>
    <property type="project" value="UniProtKB"/>
</dbReference>
<dbReference type="CDD" id="cd09601">
    <property type="entry name" value="M1_APN-Q_like"/>
    <property type="match status" value="1"/>
</dbReference>
<dbReference type="FunFam" id="1.25.50.20:FF:000001">
    <property type="entry name" value="Aminopeptidase"/>
    <property type="match status" value="1"/>
</dbReference>
<dbReference type="FunFam" id="2.60.40.1730:FF:000006">
    <property type="entry name" value="Aminopeptidase"/>
    <property type="match status" value="1"/>
</dbReference>
<dbReference type="FunFam" id="2.60.40.1910:FF:000003">
    <property type="entry name" value="Aminopeptidase"/>
    <property type="match status" value="1"/>
</dbReference>
<dbReference type="FunFam" id="1.10.390.10:FF:000016">
    <property type="entry name" value="Glutamyl aminopeptidase"/>
    <property type="match status" value="1"/>
</dbReference>
<dbReference type="Gene3D" id="1.25.50.20">
    <property type="match status" value="1"/>
</dbReference>
<dbReference type="Gene3D" id="2.60.40.1910">
    <property type="match status" value="1"/>
</dbReference>
<dbReference type="Gene3D" id="1.10.390.10">
    <property type="entry name" value="Neutral Protease Domain 2"/>
    <property type="match status" value="1"/>
</dbReference>
<dbReference type="Gene3D" id="2.60.40.1730">
    <property type="entry name" value="tricorn interacting facor f3 domain"/>
    <property type="match status" value="1"/>
</dbReference>
<dbReference type="InterPro" id="IPR045357">
    <property type="entry name" value="Aminopeptidase_N-like_N"/>
</dbReference>
<dbReference type="InterPro" id="IPR042097">
    <property type="entry name" value="Aminopeptidase_N-like_N_sf"/>
</dbReference>
<dbReference type="InterPro" id="IPR024571">
    <property type="entry name" value="ERAP1-like_C_dom"/>
</dbReference>
<dbReference type="InterPro" id="IPR034016">
    <property type="entry name" value="M1_APN-typ"/>
</dbReference>
<dbReference type="InterPro" id="IPR001930">
    <property type="entry name" value="Peptidase_M1"/>
</dbReference>
<dbReference type="InterPro" id="IPR050344">
    <property type="entry name" value="Peptidase_M1_aminopeptidases"/>
</dbReference>
<dbReference type="InterPro" id="IPR014782">
    <property type="entry name" value="Peptidase_M1_dom"/>
</dbReference>
<dbReference type="InterPro" id="IPR027268">
    <property type="entry name" value="Peptidase_M4/M1_CTD_sf"/>
</dbReference>
<dbReference type="PANTHER" id="PTHR11533:SF276">
    <property type="entry name" value="GLUTAMYL AMINOPEPTIDASE"/>
    <property type="match status" value="1"/>
</dbReference>
<dbReference type="PANTHER" id="PTHR11533">
    <property type="entry name" value="PROTEASE M1 ZINC METALLOPROTEASE"/>
    <property type="match status" value="1"/>
</dbReference>
<dbReference type="Pfam" id="PF11838">
    <property type="entry name" value="ERAP1_C"/>
    <property type="match status" value="1"/>
</dbReference>
<dbReference type="Pfam" id="PF01433">
    <property type="entry name" value="Peptidase_M1"/>
    <property type="match status" value="1"/>
</dbReference>
<dbReference type="Pfam" id="PF17900">
    <property type="entry name" value="Peptidase_M1_N"/>
    <property type="match status" value="1"/>
</dbReference>
<dbReference type="PRINTS" id="PR00756">
    <property type="entry name" value="ALADIPTASE"/>
</dbReference>
<dbReference type="SUPFAM" id="SSF63737">
    <property type="entry name" value="Leukotriene A4 hydrolase N-terminal domain"/>
    <property type="match status" value="1"/>
</dbReference>
<dbReference type="SUPFAM" id="SSF55486">
    <property type="entry name" value="Metalloproteases ('zincins'), catalytic domain"/>
    <property type="match status" value="1"/>
</dbReference>
<dbReference type="PROSITE" id="PS00142">
    <property type="entry name" value="ZINC_PROTEASE"/>
    <property type="match status" value="1"/>
</dbReference>
<reference key="1">
    <citation type="journal article" date="1993" name="Proc. Natl. Acad. Sci. U.S.A.">
        <title>Molecular cloning of the human kidney differentiation antigen gp160: human aminopeptidase A.</title>
        <authorList>
            <person name="Nanus D.M."/>
            <person name="Engelstein D."/>
            <person name="Gastl G.A."/>
            <person name="Gluck L."/>
            <person name="Vidal M.J."/>
            <person name="Morrison M."/>
            <person name="Finstad C.L."/>
            <person name="Bander N.H."/>
            <person name="Albino A.P."/>
        </authorList>
    </citation>
    <scope>NUCLEOTIDE SEQUENCE [MRNA]</scope>
    <scope>PROTEIN SEQUENCE OF 242-251; 300-316 AND 369-377</scope>
    <scope>VARIANTS ARG-213 AND ALA-218</scope>
    <source>
        <tissue>Kidney cortex</tissue>
    </source>
</reference>
<reference key="2">
    <citation type="journal article" date="1993" name="Genomics">
        <title>cDNA cloning and expression of human glutamyl aminopeptidase (aminopeptidase A).</title>
        <authorList>
            <person name="Li L."/>
            <person name="Wang J."/>
            <person name="Cooper M.D."/>
        </authorList>
    </citation>
    <scope>NUCLEOTIDE SEQUENCE [MRNA]</scope>
    <scope>VARIANT ARG-213</scope>
    <source>
        <tissue>Kidney</tissue>
    </source>
</reference>
<reference key="3">
    <citation type="journal article" date="2005" name="Nature">
        <title>Generation and annotation of the DNA sequences of human chromosomes 2 and 4.</title>
        <authorList>
            <person name="Hillier L.W."/>
            <person name="Graves T.A."/>
            <person name="Fulton R.S."/>
            <person name="Fulton L.A."/>
            <person name="Pepin K.H."/>
            <person name="Minx P."/>
            <person name="Wagner-McPherson C."/>
            <person name="Layman D."/>
            <person name="Wylie K."/>
            <person name="Sekhon M."/>
            <person name="Becker M.C."/>
            <person name="Fewell G.A."/>
            <person name="Delehaunty K.D."/>
            <person name="Miner T.L."/>
            <person name="Nash W.E."/>
            <person name="Kremitzki C."/>
            <person name="Oddy L."/>
            <person name="Du H."/>
            <person name="Sun H."/>
            <person name="Bradshaw-Cordum H."/>
            <person name="Ali J."/>
            <person name="Carter J."/>
            <person name="Cordes M."/>
            <person name="Harris A."/>
            <person name="Isak A."/>
            <person name="van Brunt A."/>
            <person name="Nguyen C."/>
            <person name="Du F."/>
            <person name="Courtney L."/>
            <person name="Kalicki J."/>
            <person name="Ozersky P."/>
            <person name="Abbott S."/>
            <person name="Armstrong J."/>
            <person name="Belter E.A."/>
            <person name="Caruso L."/>
            <person name="Cedroni M."/>
            <person name="Cotton M."/>
            <person name="Davidson T."/>
            <person name="Desai A."/>
            <person name="Elliott G."/>
            <person name="Erb T."/>
            <person name="Fronick C."/>
            <person name="Gaige T."/>
            <person name="Haakenson W."/>
            <person name="Haglund K."/>
            <person name="Holmes A."/>
            <person name="Harkins R."/>
            <person name="Kim K."/>
            <person name="Kruchowski S.S."/>
            <person name="Strong C.M."/>
            <person name="Grewal N."/>
            <person name="Goyea E."/>
            <person name="Hou S."/>
            <person name="Levy A."/>
            <person name="Martinka S."/>
            <person name="Mead K."/>
            <person name="McLellan M.D."/>
            <person name="Meyer R."/>
            <person name="Randall-Maher J."/>
            <person name="Tomlinson C."/>
            <person name="Dauphin-Kohlberg S."/>
            <person name="Kozlowicz-Reilly A."/>
            <person name="Shah N."/>
            <person name="Swearengen-Shahid S."/>
            <person name="Snider J."/>
            <person name="Strong J.T."/>
            <person name="Thompson J."/>
            <person name="Yoakum M."/>
            <person name="Leonard S."/>
            <person name="Pearman C."/>
            <person name="Trani L."/>
            <person name="Radionenko M."/>
            <person name="Waligorski J.E."/>
            <person name="Wang C."/>
            <person name="Rock S.M."/>
            <person name="Tin-Wollam A.-M."/>
            <person name="Maupin R."/>
            <person name="Latreille P."/>
            <person name="Wendl M.C."/>
            <person name="Yang S.-P."/>
            <person name="Pohl C."/>
            <person name="Wallis J.W."/>
            <person name="Spieth J."/>
            <person name="Bieri T.A."/>
            <person name="Berkowicz N."/>
            <person name="Nelson J.O."/>
            <person name="Osborne J."/>
            <person name="Ding L."/>
            <person name="Meyer R."/>
            <person name="Sabo A."/>
            <person name="Shotland Y."/>
            <person name="Sinha P."/>
            <person name="Wohldmann P.E."/>
            <person name="Cook L.L."/>
            <person name="Hickenbotham M.T."/>
            <person name="Eldred J."/>
            <person name="Williams D."/>
            <person name="Jones T.A."/>
            <person name="She X."/>
            <person name="Ciccarelli F.D."/>
            <person name="Izaurralde E."/>
            <person name="Taylor J."/>
            <person name="Schmutz J."/>
            <person name="Myers R.M."/>
            <person name="Cox D.R."/>
            <person name="Huang X."/>
            <person name="McPherson J.D."/>
            <person name="Mardis E.R."/>
            <person name="Clifton S.W."/>
            <person name="Warren W.C."/>
            <person name="Chinwalla A.T."/>
            <person name="Eddy S.R."/>
            <person name="Marra M.A."/>
            <person name="Ovcharenko I."/>
            <person name="Furey T.S."/>
            <person name="Miller W."/>
            <person name="Eichler E.E."/>
            <person name="Bork P."/>
            <person name="Suyama M."/>
            <person name="Torrents D."/>
            <person name="Waterston R.H."/>
            <person name="Wilson R.K."/>
        </authorList>
    </citation>
    <scope>NUCLEOTIDE SEQUENCE [LARGE SCALE GENOMIC DNA]</scope>
    <scope>VARIANT ARG-213</scope>
</reference>
<reference key="4">
    <citation type="journal article" date="2004" name="Genome Res.">
        <title>The status, quality, and expansion of the NIH full-length cDNA project: the Mammalian Gene Collection (MGC).</title>
        <authorList>
            <consortium name="The MGC Project Team"/>
        </authorList>
    </citation>
    <scope>NUCLEOTIDE SEQUENCE [LARGE SCALE MRNA]</scope>
    <scope>VARIANT ARG-213</scope>
    <source>
        <tissue>Placenta</tissue>
    </source>
</reference>
<reference key="5">
    <citation type="journal article" date="2000" name="Placenta">
        <title>Expression of aminopeptidase A in human gestational choriocarcinoma cell lines and tissues.</title>
        <authorList>
            <person name="Ino K."/>
            <person name="Nagasaka T."/>
            <person name="Okamoto T."/>
            <person name="Uehara C."/>
            <person name="Nakazato H."/>
            <person name="Nakashima N."/>
            <person name="Mizutani S."/>
        </authorList>
    </citation>
    <scope>CATALYTIC ACTIVITY</scope>
    <scope>ACTIVITY REGULATION</scope>
    <scope>SUBCELLULAR LOCATION</scope>
    <scope>TISSUE SPECIFICITY</scope>
</reference>
<reference key="6">
    <citation type="journal article" date="2005" name="J. Proteome Res.">
        <title>Human plasma N-glycoproteome analysis by immunoaffinity subtraction, hydrazide chemistry, and mass spectrometry.</title>
        <authorList>
            <person name="Liu T."/>
            <person name="Qian W.-J."/>
            <person name="Gritsenko M.A."/>
            <person name="Camp D.G. II"/>
            <person name="Monroe M.E."/>
            <person name="Moore R.J."/>
            <person name="Smith R.D."/>
        </authorList>
    </citation>
    <scope>GLYCOSYLATION [LARGE SCALE ANALYSIS] AT ASN-607</scope>
    <source>
        <tissue>Plasma</tissue>
    </source>
</reference>
<reference key="7">
    <citation type="journal article" date="2009" name="J. Proteome Res.">
        <title>Glycoproteomics analysis of human liver tissue by combination of multiple enzyme digestion and hydrazide chemistry.</title>
        <authorList>
            <person name="Chen R."/>
            <person name="Jiang X."/>
            <person name="Sun D."/>
            <person name="Han G."/>
            <person name="Wang F."/>
            <person name="Ye M."/>
            <person name="Wang L."/>
            <person name="Zou H."/>
        </authorList>
    </citation>
    <scope>GLYCOSYLATION [LARGE SCALE ANALYSIS] AT ASN-124; ASN-324; ASN-607; ASN-763 AND ASN-773</scope>
    <source>
        <tissue>Liver</tissue>
    </source>
</reference>
<reference key="8">
    <citation type="journal article" date="2011" name="BMC Syst. Biol.">
        <title>Initial characterization of the human central proteome.</title>
        <authorList>
            <person name="Burkard T.R."/>
            <person name="Planyavsky M."/>
            <person name="Kaupe I."/>
            <person name="Breitwieser F.P."/>
            <person name="Buerckstuemmer T."/>
            <person name="Bennett K.L."/>
            <person name="Superti-Furga G."/>
            <person name="Colinge J."/>
        </authorList>
    </citation>
    <scope>IDENTIFICATION BY MASS SPECTROMETRY [LARGE SCALE ANALYSIS]</scope>
</reference>
<reference evidence="15 16 17 18 19 20 21" key="9">
    <citation type="journal article" date="2013" name="J. Biol. Chem.">
        <title>Structural insights into central hypertension regulation by human aminopeptidase A.</title>
        <authorList>
            <person name="Yang Y."/>
            <person name="Liu C."/>
            <person name="Lin Y.L."/>
            <person name="Li F."/>
        </authorList>
    </citation>
    <scope>X-RAY CRYSTALLOGRAPHY (2.15 ANGSTROMS) OF 76-957 IN COMPLEX WITH SUBSTRATE; CALCIUM AND INHIBITORS</scope>
    <scope>FUNCTION</scope>
    <scope>CATALYTIC ACTIVITY</scope>
    <scope>ACTIVITY REGULATION</scope>
    <scope>SUBUNIT</scope>
    <scope>ACTIVE SITE</scope>
    <scope>METAL-BINDING SITES</scope>
    <scope>SUBSTRATE-BINDING</scope>
    <scope>COFACTOR</scope>
    <scope>SITE</scope>
    <scope>MUTAGENESIS OF THR-356 AND ARG-887</scope>
    <scope>GLYCOSYLATION AT ASN-98; ASN-197; ASN-324; ASN-340; ASN-554; ASN-597; ASN-678; ASN-763; ASN-801 AND ASN-828</scope>
</reference>
<reference key="10">
    <citation type="journal article" date="2006" name="Science">
        <title>The consensus coding sequences of human breast and colorectal cancers.</title>
        <authorList>
            <person name="Sjoeblom T."/>
            <person name="Jones S."/>
            <person name="Wood L.D."/>
            <person name="Parsons D.W."/>
            <person name="Lin J."/>
            <person name="Barber T.D."/>
            <person name="Mandelker D."/>
            <person name="Leary R.J."/>
            <person name="Ptak J."/>
            <person name="Silliman N."/>
            <person name="Szabo S."/>
            <person name="Buckhaults P."/>
            <person name="Farrell C."/>
            <person name="Meeh P."/>
            <person name="Markowitz S.D."/>
            <person name="Willis J."/>
            <person name="Dawson D."/>
            <person name="Willson J.K.V."/>
            <person name="Gazdar A.F."/>
            <person name="Hartigan J."/>
            <person name="Wu L."/>
            <person name="Liu C."/>
            <person name="Parmigiani G."/>
            <person name="Park B.H."/>
            <person name="Bachman K.E."/>
            <person name="Papadopoulos N."/>
            <person name="Vogelstein B."/>
            <person name="Kinzler K.W."/>
            <person name="Velculescu V.E."/>
        </authorList>
    </citation>
    <scope>VARIANT [LARGE SCALE ANALYSIS] THR-887</scope>
</reference>
<feature type="chain" id="PRO_0000095095" description="Glutamyl aminopeptidase">
    <location>
        <begin position="1"/>
        <end position="957"/>
    </location>
</feature>
<feature type="topological domain" description="Cytoplasmic" evidence="1">
    <location>
        <begin position="1"/>
        <end position="18"/>
    </location>
</feature>
<feature type="transmembrane region" description="Helical; Signal-anchor for type II membrane protein" evidence="1">
    <location>
        <begin position="19"/>
        <end position="39"/>
    </location>
</feature>
<feature type="topological domain" description="Extracellular" evidence="1">
    <location>
        <begin position="40"/>
        <end position="957"/>
    </location>
</feature>
<feature type="region of interest" description="Disordered" evidence="3">
    <location>
        <begin position="44"/>
        <end position="83"/>
    </location>
</feature>
<feature type="active site" description="Proton acceptor" evidence="2 10 19 21">
    <location>
        <position position="394"/>
    </location>
</feature>
<feature type="binding site" evidence="10 17 18 19">
    <location>
        <position position="223"/>
    </location>
    <ligand>
        <name>substrate</name>
    </ligand>
</feature>
<feature type="binding site" evidence="10 18 19 20 21">
    <location>
        <begin position="357"/>
        <end position="361"/>
    </location>
    <ligand>
        <name>substrate</name>
    </ligand>
</feature>
<feature type="binding site" evidence="2 10 15 16 17 18 19 20 21">
    <location>
        <position position="393"/>
    </location>
    <ligand>
        <name>Zn(2+)</name>
        <dbReference type="ChEBI" id="CHEBI:29105"/>
        <note>catalytic</note>
    </ligand>
</feature>
<feature type="binding site" evidence="2 10 15 16 17 18 19 20 21">
    <location>
        <position position="397"/>
    </location>
    <ligand>
        <name>Zn(2+)</name>
        <dbReference type="ChEBI" id="CHEBI:29105"/>
        <note>catalytic</note>
    </ligand>
</feature>
<feature type="binding site" evidence="2 10 15 16 17 18 19 20 21">
    <location>
        <position position="416"/>
    </location>
    <ligand>
        <name>Zn(2+)</name>
        <dbReference type="ChEBI" id="CHEBI:29105"/>
        <note>catalytic</note>
    </ligand>
</feature>
<feature type="binding site" evidence="10 18 20 21">
    <location>
        <position position="887"/>
    </location>
    <ligand>
        <name>substrate</name>
    </ligand>
</feature>
<feature type="site" description="Binds calcium which modulates its enzyme activity" evidence="10">
    <location>
        <position position="221"/>
    </location>
</feature>
<feature type="site" description="Transition state stabilizer" evidence="10 17 18 19 20 21">
    <location>
        <position position="479"/>
    </location>
</feature>
<feature type="glycosylation site" description="N-linked (GlcNAc...) asparagine; atypical" evidence="10 15">
    <location>
        <position position="98"/>
    </location>
</feature>
<feature type="glycosylation site" description="N-linked (GlcNAc...) asparagine" evidence="9">
    <location>
        <position position="124"/>
    </location>
</feature>
<feature type="glycosylation site" description="N-linked (GlcNAc...) asparagine" evidence="10 15 16 17 18 19 20 21">
    <location>
        <position position="197"/>
    </location>
</feature>
<feature type="glycosylation site" description="N-linked (GlcNAc...) asparagine" evidence="9 10 15 16 17 18 19 20 21">
    <location>
        <position position="324"/>
    </location>
</feature>
<feature type="glycosylation site" description="N-linked (GlcNAc...) asparagine" evidence="10 16 17 18 19 20">
    <location>
        <position position="340"/>
    </location>
</feature>
<feature type="glycosylation site" description="N-linked (GlcNAc...) asparagine" evidence="10 15 16 17 18 20 21">
    <location>
        <position position="554"/>
    </location>
</feature>
<feature type="glycosylation site" description="N-linked (GlcNAc...) asparagine" evidence="1">
    <location>
        <position position="589"/>
    </location>
</feature>
<feature type="glycosylation site" description="N-linked (GlcNAc...) asparagine" evidence="10 16 21">
    <location>
        <position position="597"/>
    </location>
</feature>
<feature type="glycosylation site" description="N-linked (GlcNAc...) asparagine" evidence="7 9">
    <location>
        <position position="607"/>
    </location>
</feature>
<feature type="glycosylation site" description="N-linked (GlcNAc...) asparagine" evidence="10 15 16 17 18 19 20 21">
    <location>
        <position position="678"/>
    </location>
</feature>
<feature type="glycosylation site" description="N-linked (GlcNAc...) asparagine" evidence="9 10 15 16 17 18 19 20 21">
    <location>
        <position position="763"/>
    </location>
</feature>
<feature type="glycosylation site" description="N-linked (GlcNAc...) asparagine" evidence="9">
    <location>
        <position position="773"/>
    </location>
</feature>
<feature type="glycosylation site" description="N-linked (GlcNAc...) asparagine" evidence="10 15 16 17 18 19 20 21">
    <location>
        <position position="801"/>
    </location>
</feature>
<feature type="glycosylation site" description="N-linked (GlcNAc...) asparagine" evidence="10 15 16 17 18 19 20 21">
    <location>
        <position position="828"/>
    </location>
</feature>
<feature type="sequence variant" id="VAR_030359" description="In dbSNP:rs10004516." evidence="5 6 11 12">
    <original>Q</original>
    <variation>R</variation>
    <location>
        <position position="213"/>
    </location>
</feature>
<feature type="sequence variant" id="VAR_030360" description="In dbSNP:rs1126483." evidence="12">
    <original>V</original>
    <variation>A</variation>
    <location>
        <position position="218"/>
    </location>
</feature>
<feature type="sequence variant" id="VAR_057056" description="In dbSNP:rs34949711.">
    <original>R</original>
    <variation>H</variation>
    <location>
        <position position="437"/>
    </location>
</feature>
<feature type="sequence variant" id="VAR_057057" description="In dbSNP:rs35812243.">
    <original>S</original>
    <variation>R</variation>
    <location>
        <position position="861"/>
    </location>
</feature>
<feature type="sequence variant" id="VAR_036047" description="In a breast cancer sample; somatic mutation." evidence="8">
    <original>R</original>
    <variation>T</variation>
    <location>
        <position position="887"/>
    </location>
</feature>
<feature type="mutagenesis site" description="Reduced enzyme activity." evidence="10">
    <original>T</original>
    <variation>V</variation>
    <location>
        <position position="356"/>
    </location>
</feature>
<feature type="mutagenesis site" description="Reduced enzyme activity." evidence="10">
    <original>R</original>
    <variation>A</variation>
    <location>
        <position position="887"/>
    </location>
</feature>
<feature type="helix" evidence="22">
    <location>
        <begin position="87"/>
        <end position="89"/>
    </location>
</feature>
<feature type="strand" evidence="22">
    <location>
        <begin position="90"/>
        <end position="92"/>
    </location>
</feature>
<feature type="strand" evidence="22">
    <location>
        <begin position="97"/>
        <end position="109"/>
    </location>
</feature>
<feature type="helix" evidence="22">
    <location>
        <begin position="110"/>
        <end position="112"/>
    </location>
</feature>
<feature type="strand" evidence="22">
    <location>
        <begin position="114"/>
        <end position="125"/>
    </location>
</feature>
<feature type="strand" evidence="22">
    <location>
        <begin position="129"/>
        <end position="135"/>
    </location>
</feature>
<feature type="strand" evidence="22">
    <location>
        <begin position="138"/>
        <end position="148"/>
    </location>
</feature>
<feature type="strand" evidence="22">
    <location>
        <begin position="157"/>
        <end position="163"/>
    </location>
</feature>
<feature type="helix" evidence="22">
    <location>
        <begin position="164"/>
        <end position="166"/>
    </location>
</feature>
<feature type="strand" evidence="22">
    <location>
        <begin position="168"/>
        <end position="177"/>
    </location>
</feature>
<feature type="strand" evidence="23">
    <location>
        <begin position="181"/>
        <end position="183"/>
    </location>
</feature>
<feature type="strand" evidence="22">
    <location>
        <begin position="186"/>
        <end position="195"/>
    </location>
</feature>
<feature type="strand" evidence="22">
    <location>
        <begin position="200"/>
        <end position="210"/>
    </location>
</feature>
<feature type="strand" evidence="22">
    <location>
        <begin position="213"/>
        <end position="221"/>
    </location>
</feature>
<feature type="turn" evidence="22">
    <location>
        <begin position="223"/>
        <end position="226"/>
    </location>
</feature>
<feature type="helix" evidence="22">
    <location>
        <begin position="227"/>
        <end position="230"/>
    </location>
</feature>
<feature type="strand" evidence="22">
    <location>
        <begin position="241"/>
        <end position="250"/>
    </location>
</feature>
<feature type="strand" evidence="22">
    <location>
        <begin position="253"/>
        <end position="259"/>
    </location>
</feature>
<feature type="strand" evidence="22">
    <location>
        <begin position="261"/>
        <end position="276"/>
    </location>
</feature>
<feature type="helix" evidence="22">
    <location>
        <begin position="284"/>
        <end position="286"/>
    </location>
</feature>
<feature type="strand" evidence="22">
    <location>
        <begin position="289"/>
        <end position="292"/>
    </location>
</feature>
<feature type="strand" evidence="22">
    <location>
        <begin position="295"/>
        <end position="300"/>
    </location>
</feature>
<feature type="strand" evidence="22">
    <location>
        <begin position="306"/>
        <end position="311"/>
    </location>
</feature>
<feature type="helix" evidence="22">
    <location>
        <begin position="313"/>
        <end position="319"/>
    </location>
</feature>
<feature type="helix" evidence="22">
    <location>
        <begin position="320"/>
        <end position="336"/>
    </location>
</feature>
<feature type="strand" evidence="22">
    <location>
        <begin position="342"/>
        <end position="344"/>
    </location>
</feature>
<feature type="strand" evidence="22">
    <location>
        <begin position="346"/>
        <end position="353"/>
    </location>
</feature>
<feature type="strand" evidence="22">
    <location>
        <begin position="355"/>
        <end position="359"/>
    </location>
</feature>
<feature type="strand" evidence="22">
    <location>
        <begin position="364"/>
        <end position="368"/>
    </location>
</feature>
<feature type="helix" evidence="22">
    <location>
        <begin position="369"/>
        <end position="371"/>
    </location>
</feature>
<feature type="turn" evidence="22">
    <location>
        <begin position="376"/>
        <end position="378"/>
    </location>
</feature>
<feature type="helix" evidence="22">
    <location>
        <begin position="381"/>
        <end position="397"/>
    </location>
</feature>
<feature type="turn" evidence="22">
    <location>
        <begin position="401"/>
        <end position="403"/>
    </location>
</feature>
<feature type="strand" evidence="22">
    <location>
        <begin position="404"/>
        <end position="408"/>
    </location>
</feature>
<feature type="helix" evidence="22">
    <location>
        <begin position="409"/>
        <end position="412"/>
    </location>
</feature>
<feature type="helix" evidence="22">
    <location>
        <begin position="413"/>
        <end position="430"/>
    </location>
</feature>
<feature type="helix" evidence="22">
    <location>
        <begin position="432"/>
        <end position="434"/>
    </location>
</feature>
<feature type="helix" evidence="22">
    <location>
        <begin position="436"/>
        <end position="443"/>
    </location>
</feature>
<feature type="helix" evidence="22">
    <location>
        <begin position="445"/>
        <end position="451"/>
    </location>
</feature>
<feature type="helix" evidence="22">
    <location>
        <begin position="467"/>
        <end position="472"/>
    </location>
</feature>
<feature type="helix" evidence="22">
    <location>
        <begin position="476"/>
        <end position="493"/>
    </location>
</feature>
<feature type="helix" evidence="22">
    <location>
        <begin position="495"/>
        <end position="508"/>
    </location>
</feature>
<feature type="strand" evidence="22">
    <location>
        <begin position="512"/>
        <end position="514"/>
    </location>
</feature>
<feature type="helix" evidence="22">
    <location>
        <begin position="516"/>
        <end position="527"/>
    </location>
</feature>
<feature type="helix" evidence="22">
    <location>
        <begin position="531"/>
        <end position="535"/>
    </location>
</feature>
<feature type="helix" evidence="22">
    <location>
        <begin position="536"/>
        <end position="538"/>
    </location>
</feature>
<feature type="strand" evidence="22">
    <location>
        <begin position="545"/>
        <end position="550"/>
    </location>
</feature>
<feature type="turn" evidence="22">
    <location>
        <begin position="551"/>
        <end position="553"/>
    </location>
</feature>
<feature type="strand" evidence="22">
    <location>
        <begin position="554"/>
        <end position="559"/>
    </location>
</feature>
<feature type="turn" evidence="22">
    <location>
        <begin position="574"/>
        <end position="577"/>
    </location>
</feature>
<feature type="strand" evidence="22">
    <location>
        <begin position="581"/>
        <end position="587"/>
    </location>
</feature>
<feature type="strand" evidence="22">
    <location>
        <begin position="590"/>
        <end position="596"/>
    </location>
</feature>
<feature type="strand" evidence="22">
    <location>
        <begin position="618"/>
        <end position="620"/>
    </location>
</feature>
<feature type="helix" evidence="22">
    <location>
        <begin position="621"/>
        <end position="623"/>
    </location>
</feature>
<feature type="strand" evidence="22">
    <location>
        <begin position="625"/>
        <end position="630"/>
    </location>
</feature>
<feature type="helix" evidence="22">
    <location>
        <begin position="633"/>
        <end position="646"/>
    </location>
</feature>
<feature type="helix" evidence="22">
    <location>
        <begin position="647"/>
        <end position="649"/>
    </location>
</feature>
<feature type="helix" evidence="22">
    <location>
        <begin position="652"/>
        <end position="667"/>
    </location>
</feature>
<feature type="helix" evidence="22">
    <location>
        <begin position="673"/>
        <end position="678"/>
    </location>
</feature>
<feature type="turn" evidence="22">
    <location>
        <begin position="679"/>
        <end position="682"/>
    </location>
</feature>
<feature type="helix" evidence="22">
    <location>
        <begin position="683"/>
        <end position="685"/>
    </location>
</feature>
<feature type="helix" evidence="22">
    <location>
        <begin position="689"/>
        <end position="705"/>
    </location>
</feature>
<feature type="turn" evidence="22">
    <location>
        <begin position="706"/>
        <end position="708"/>
    </location>
</feature>
<feature type="helix" evidence="22">
    <location>
        <begin position="712"/>
        <end position="731"/>
    </location>
</feature>
<feature type="helix" evidence="22">
    <location>
        <begin position="739"/>
        <end position="754"/>
    </location>
</feature>
<feature type="helix" evidence="22">
    <location>
        <begin position="758"/>
        <end position="771"/>
    </location>
</feature>
<feature type="turn" evidence="22">
    <location>
        <begin position="780"/>
        <end position="782"/>
    </location>
</feature>
<feature type="helix" evidence="22">
    <location>
        <begin position="783"/>
        <end position="794"/>
    </location>
</feature>
<feature type="helix" evidence="22">
    <location>
        <begin position="797"/>
        <end position="809"/>
    </location>
</feature>
<feature type="helix" evidence="22">
    <location>
        <begin position="813"/>
        <end position="823"/>
    </location>
</feature>
<feature type="helix" evidence="22">
    <location>
        <begin position="829"/>
        <end position="838"/>
    </location>
</feature>
<feature type="turn" evidence="22">
    <location>
        <begin position="842"/>
        <end position="844"/>
    </location>
</feature>
<feature type="helix" evidence="22">
    <location>
        <begin position="847"/>
        <end position="849"/>
    </location>
</feature>
<feature type="helix" evidence="22">
    <location>
        <begin position="850"/>
        <end position="858"/>
    </location>
</feature>
<feature type="helix" evidence="22">
    <location>
        <begin position="863"/>
        <end position="873"/>
    </location>
</feature>
<feature type="helix" evidence="22">
    <location>
        <begin position="875"/>
        <end position="882"/>
    </location>
</feature>
<feature type="helix" evidence="22">
    <location>
        <begin position="887"/>
        <end position="891"/>
    </location>
</feature>
<feature type="helix" evidence="22">
    <location>
        <begin position="892"/>
        <end position="896"/>
    </location>
</feature>
<feature type="helix" evidence="22">
    <location>
        <begin position="902"/>
        <end position="914"/>
    </location>
</feature>
<feature type="helix" evidence="22">
    <location>
        <begin position="919"/>
        <end position="921"/>
    </location>
</feature>
<feature type="helix" evidence="22">
    <location>
        <begin position="922"/>
        <end position="953"/>
    </location>
</feature>
<evidence type="ECO:0000255" key="1"/>
<evidence type="ECO:0000255" key="2">
    <source>
        <dbReference type="PROSITE-ProRule" id="PRU10095"/>
    </source>
</evidence>
<evidence type="ECO:0000256" key="3">
    <source>
        <dbReference type="SAM" id="MobiDB-lite"/>
    </source>
</evidence>
<evidence type="ECO:0000269" key="4">
    <source>
    </source>
</evidence>
<evidence type="ECO:0000269" key="5">
    <source>
    </source>
</evidence>
<evidence type="ECO:0000269" key="6">
    <source>
    </source>
</evidence>
<evidence type="ECO:0000269" key="7">
    <source>
    </source>
</evidence>
<evidence type="ECO:0000269" key="8">
    <source>
    </source>
</evidence>
<evidence type="ECO:0000269" key="9">
    <source>
    </source>
</evidence>
<evidence type="ECO:0000269" key="10">
    <source>
    </source>
</evidence>
<evidence type="ECO:0000269" key="11">
    <source>
    </source>
</evidence>
<evidence type="ECO:0000269" key="12">
    <source>
    </source>
</evidence>
<evidence type="ECO:0000305" key="13"/>
<evidence type="ECO:0000305" key="14">
    <source>
    </source>
</evidence>
<evidence type="ECO:0007744" key="15">
    <source>
        <dbReference type="PDB" id="4KX7"/>
    </source>
</evidence>
<evidence type="ECO:0007744" key="16">
    <source>
        <dbReference type="PDB" id="4KX8"/>
    </source>
</evidence>
<evidence type="ECO:0007744" key="17">
    <source>
        <dbReference type="PDB" id="4KX9"/>
    </source>
</evidence>
<evidence type="ECO:0007744" key="18">
    <source>
        <dbReference type="PDB" id="4KXA"/>
    </source>
</evidence>
<evidence type="ECO:0007744" key="19">
    <source>
        <dbReference type="PDB" id="4KXB"/>
    </source>
</evidence>
<evidence type="ECO:0007744" key="20">
    <source>
        <dbReference type="PDB" id="4KXC"/>
    </source>
</evidence>
<evidence type="ECO:0007744" key="21">
    <source>
        <dbReference type="PDB" id="4KXD"/>
    </source>
</evidence>
<evidence type="ECO:0007829" key="22">
    <source>
        <dbReference type="PDB" id="4KX7"/>
    </source>
</evidence>
<evidence type="ECO:0007829" key="23">
    <source>
        <dbReference type="PDB" id="4KXD"/>
    </source>
</evidence>
<organism>
    <name type="scientific">Homo sapiens</name>
    <name type="common">Human</name>
    <dbReference type="NCBI Taxonomy" id="9606"/>
    <lineage>
        <taxon>Eukaryota</taxon>
        <taxon>Metazoa</taxon>
        <taxon>Chordata</taxon>
        <taxon>Craniata</taxon>
        <taxon>Vertebrata</taxon>
        <taxon>Euteleostomi</taxon>
        <taxon>Mammalia</taxon>
        <taxon>Eutheria</taxon>
        <taxon>Euarchontoglires</taxon>
        <taxon>Primates</taxon>
        <taxon>Haplorrhini</taxon>
        <taxon>Catarrhini</taxon>
        <taxon>Hominidae</taxon>
        <taxon>Homo</taxon>
    </lineage>
</organism>
<comment type="function">
    <text evidence="14">Regulates central hypertension through its calcium-modulated preference to cleave N-terminal acidic residues from peptides such as angiotensin II.</text>
</comment>
<comment type="catalytic activity">
    <reaction evidence="4 10">
        <text>Release of N-terminal glutamate (and to a lesser extent aspartate) from a peptide.</text>
        <dbReference type="EC" id="3.4.11.7"/>
    </reaction>
</comment>
<comment type="cofactor">
    <cofactor evidence="10">
        <name>Zn(2+)</name>
        <dbReference type="ChEBI" id="CHEBI:29105"/>
    </cofactor>
    <text evidence="10">Binds 1 zinc ion per subunit.</text>
</comment>
<comment type="activity regulation">
    <text evidence="4 10">Substrate specificity is modulated by calcium which enhances the enzymatic activity for cleavage of acidic residues while reducing its activity with basic residues. Inhibited by aminopeptidase inhibitors amastatin and bestatin.</text>
</comment>
<comment type="subunit">
    <text evidence="10">Homodimer; disulfide-linked.</text>
</comment>
<comment type="subcellular location">
    <subcellularLocation>
        <location evidence="4">Cell membrane</location>
        <topology>Single-pass type II membrane protein</topology>
    </subcellularLocation>
</comment>
<comment type="tissue specificity">
    <text evidence="4">Expressed in choriocarcinoma cancer cell lines (at protein level) (PubMed:10692253). Expressed by epithelial cells of the proximal tubule cells and the glomerulus of the nephron. Also found in a variety of other tissues.</text>
</comment>
<comment type="similarity">
    <text evidence="13">Belongs to the peptidase M1 family.</text>
</comment>
<name>AMPE_HUMAN</name>
<gene>
    <name type="primary">ENPEP</name>
</gene>
<keyword id="KW-0002">3D-structure</keyword>
<keyword id="KW-0031">Aminopeptidase</keyword>
<keyword id="KW-0106">Calcium</keyword>
<keyword id="KW-1003">Cell membrane</keyword>
<keyword id="KW-0903">Direct protein sequencing</keyword>
<keyword id="KW-1015">Disulfide bond</keyword>
<keyword id="KW-0325">Glycoprotein</keyword>
<keyword id="KW-0378">Hydrolase</keyword>
<keyword id="KW-0472">Membrane</keyword>
<keyword id="KW-0479">Metal-binding</keyword>
<keyword id="KW-0482">Metalloprotease</keyword>
<keyword id="KW-0645">Protease</keyword>
<keyword id="KW-1267">Proteomics identification</keyword>
<keyword id="KW-1185">Reference proteome</keyword>
<keyword id="KW-0735">Signal-anchor</keyword>
<keyword id="KW-0812">Transmembrane</keyword>
<keyword id="KW-1133">Transmembrane helix</keyword>
<keyword id="KW-0862">Zinc</keyword>
<protein>
    <recommendedName>
        <fullName>Glutamyl aminopeptidase</fullName>
        <shortName>EAP</shortName>
        <ecNumber evidence="4 10">3.4.11.7</ecNumber>
    </recommendedName>
    <alternativeName>
        <fullName>Aminopeptidase A</fullName>
        <shortName>AP-A</shortName>
    </alternativeName>
    <alternativeName>
        <fullName>Differentiation antigen gp160</fullName>
    </alternativeName>
    <cdAntigenName>CD249</cdAntigenName>
</protein>
<accession>Q07075</accession>
<accession>Q504U2</accession>
<proteinExistence type="evidence at protein level"/>
<sequence>MNFAEREGSKRYCIQTKHVAILCAVVVGVGLIVGLAVGLTRSCDSSGDGGPGTAPAPSHLPSSTASPSGPPAQDQDICPASEDESGQWKNFRLPDFVNPVHYDLHVKPLLEEDTYTGTVSISINLSAPTRYLWLHLRETRITRLPELKRPSGDQVQVRRCFEYKKQEYVVVEAEEELTPSSGDGLYLLTMEFAGWLNGSLVGFYRTTYTENGQVKSIVATDHEPTDARKSFPCFDEPNKKATYTISITHPKEYGALSNMPVAKEESVDDKWTRTTFEKSVPMSTYLVCFAVHQFDSVKRISNSGKPLTIYVQPEQKHTAEYAANITKSVFDYFEEYFAMNYSLPKLDKIAIPDFGTGAMENWGLITYRETNLLYDPKESASSNQQRVATVVAHELVHQWFGNIVTMDWWEDLWLNEGFASFFEFLGVNHAETDWQMRDQMLLEDVLPVQEDDSLMSSHPIIVTVTTPDEITSVFDGISYSKGSSILRMLEDWIKPENFQKGCQMYLEKYQFKNAKTSDFWAALEEASRLPVKEVMDTWTRQMGYPVLNVNGVKNITQKRFLLDPRANPSQPPSDLGYTWNIPVKWTEDNITSSVLFNRSEKEGITLNSSNPSGNAFLKINPDHIGFYRVNYEVATWDSIATALSLNHKTFSSADRASLIDDAFALARAQLLDYKVALNLTKYLKREENFLPWQRVISAVTYIISMFEDDKELYPMIEEYFQGQVKPIADSLGWNDAGDHVTKLLRSSVLGFACKMGDREALNNASSLFEQWLNGTVSLPVNLRLLVYRYGMQNSGNEISWNYTLEQYQKTSLAQEKEKLLYGLASVKNVTLLSRYLDLLKDTNLIKTQDVFTVIRYISYNSYGKNMAWNWIQLNWDYLVNRYTLNNRNLGRIVTIAEPFNTELQLWQMESFFAKYPQAGAGEKPREQVLETVKNNIEWLKQHRNTIREWFFNLLESG</sequence>